<dbReference type="EMBL" id="U39068">
    <property type="protein sequence ID" value="AAA82715.1"/>
    <property type="status" value="ALT_FRAME"/>
    <property type="molecule type" value="Genomic_DNA"/>
</dbReference>
<dbReference type="EMBL" id="CP000627">
    <property type="protein sequence ID" value="ABQ21895.1"/>
    <property type="molecule type" value="Genomic_DNA"/>
</dbReference>
<dbReference type="EMBL" id="CP001235">
    <property type="protein sequence ID" value="ACP08878.1"/>
    <property type="molecule type" value="Genomic_DNA"/>
</dbReference>
<dbReference type="RefSeq" id="WP_000162689.1">
    <property type="nucleotide sequence ID" value="NZ_JAACZH010000023.1"/>
</dbReference>
<dbReference type="SMR" id="A5F375"/>
<dbReference type="GeneID" id="89515035"/>
<dbReference type="KEGG" id="vco:VC0395_A0374"/>
<dbReference type="KEGG" id="vcr:VC395_0864"/>
<dbReference type="PATRIC" id="fig|345073.21.peg.836"/>
<dbReference type="eggNOG" id="COG0691">
    <property type="taxonomic scope" value="Bacteria"/>
</dbReference>
<dbReference type="HOGENOM" id="CLU_108953_3_0_6"/>
<dbReference type="OrthoDB" id="9805462at2"/>
<dbReference type="Proteomes" id="UP000000249">
    <property type="component" value="Chromosome 2"/>
</dbReference>
<dbReference type="GO" id="GO:0005829">
    <property type="term" value="C:cytosol"/>
    <property type="evidence" value="ECO:0007669"/>
    <property type="project" value="TreeGrafter"/>
</dbReference>
<dbReference type="GO" id="GO:0003723">
    <property type="term" value="F:RNA binding"/>
    <property type="evidence" value="ECO:0007669"/>
    <property type="project" value="UniProtKB-UniRule"/>
</dbReference>
<dbReference type="GO" id="GO:0070929">
    <property type="term" value="P:trans-translation"/>
    <property type="evidence" value="ECO:0007669"/>
    <property type="project" value="UniProtKB-UniRule"/>
</dbReference>
<dbReference type="CDD" id="cd09294">
    <property type="entry name" value="SmpB"/>
    <property type="match status" value="1"/>
</dbReference>
<dbReference type="Gene3D" id="2.40.280.10">
    <property type="match status" value="1"/>
</dbReference>
<dbReference type="HAMAP" id="MF_00023">
    <property type="entry name" value="SmpB"/>
    <property type="match status" value="1"/>
</dbReference>
<dbReference type="InterPro" id="IPR023620">
    <property type="entry name" value="SmpB"/>
</dbReference>
<dbReference type="InterPro" id="IPR000037">
    <property type="entry name" value="SsrA-bd_prot"/>
</dbReference>
<dbReference type="InterPro" id="IPR020081">
    <property type="entry name" value="SsrA-bd_prot_CS"/>
</dbReference>
<dbReference type="NCBIfam" id="NF003843">
    <property type="entry name" value="PRK05422.1"/>
    <property type="match status" value="1"/>
</dbReference>
<dbReference type="NCBIfam" id="TIGR00086">
    <property type="entry name" value="smpB"/>
    <property type="match status" value="1"/>
</dbReference>
<dbReference type="PANTHER" id="PTHR30308:SF2">
    <property type="entry name" value="SSRA-BINDING PROTEIN"/>
    <property type="match status" value="1"/>
</dbReference>
<dbReference type="PANTHER" id="PTHR30308">
    <property type="entry name" value="TMRNA-BINDING COMPONENT OF TRANS-TRANSLATION TAGGING COMPLEX"/>
    <property type="match status" value="1"/>
</dbReference>
<dbReference type="Pfam" id="PF01668">
    <property type="entry name" value="SmpB"/>
    <property type="match status" value="1"/>
</dbReference>
<dbReference type="SUPFAM" id="SSF74982">
    <property type="entry name" value="Small protein B (SmpB)"/>
    <property type="match status" value="1"/>
</dbReference>
<dbReference type="PROSITE" id="PS01317">
    <property type="entry name" value="SSRP"/>
    <property type="match status" value="1"/>
</dbReference>
<proteinExistence type="inferred from homology"/>
<feature type="chain" id="PRO_1000071007" description="SsrA-binding protein">
    <location>
        <begin position="1"/>
        <end position="161"/>
    </location>
</feature>
<keyword id="KW-0963">Cytoplasm</keyword>
<keyword id="KW-0694">RNA-binding</keyword>
<sequence>MTKKKTNTKAGSNTIALNKKARHEYFIEDEFEAGMELQGWEVKSLRQGKANIAESYVYIKDGEAFISGMTIIPLQQASTHVVANPTRIRKLLLSRRELDNLFGRINREGMTLTALSLYWSRSWVKIKIGVAKGKKLHDKREDLKEKEWQRQKDRVMKSALR</sequence>
<evidence type="ECO:0000255" key="1">
    <source>
        <dbReference type="HAMAP-Rule" id="MF_00023"/>
    </source>
</evidence>
<evidence type="ECO:0000305" key="2"/>
<accession>A5F375</accession>
<accession>C3LYL2</accession>
<protein>
    <recommendedName>
        <fullName evidence="1">SsrA-binding protein</fullName>
    </recommendedName>
    <alternativeName>
        <fullName evidence="1">Small protein B</fullName>
    </alternativeName>
</protein>
<gene>
    <name evidence="1" type="primary">smpB</name>
    <name type="ordered locus">VC0395_A0374</name>
    <name type="ordered locus">VC395_0864</name>
</gene>
<reference key="1">
    <citation type="submission" date="1995-10" db="EMBL/GenBank/DDBJ databases">
        <authorList>
            <person name="Kovach M.E."/>
            <person name="Hughes K.J."/>
            <person name="Harkey C.W."/>
            <person name="Everiss K.D."/>
            <person name="Shaffer M.D."/>
            <person name="Peterson K.M."/>
        </authorList>
    </citation>
    <scope>NUCLEOTIDE SEQUENCE [GENOMIC DNA]</scope>
</reference>
<reference key="2">
    <citation type="submission" date="2007-03" db="EMBL/GenBank/DDBJ databases">
        <authorList>
            <person name="Heidelberg J."/>
        </authorList>
    </citation>
    <scope>NUCLEOTIDE SEQUENCE [LARGE SCALE GENOMIC DNA]</scope>
    <source>
        <strain>ATCC 39541 / Classical Ogawa 395 / O395</strain>
    </source>
</reference>
<reference key="3">
    <citation type="journal article" date="2008" name="PLoS ONE">
        <title>A recalibrated molecular clock and independent origins for the cholera pandemic clones.</title>
        <authorList>
            <person name="Feng L."/>
            <person name="Reeves P.R."/>
            <person name="Lan R."/>
            <person name="Ren Y."/>
            <person name="Gao C."/>
            <person name="Zhou Z."/>
            <person name="Ren Y."/>
            <person name="Cheng J."/>
            <person name="Wang W."/>
            <person name="Wang J."/>
            <person name="Qian W."/>
            <person name="Li D."/>
            <person name="Wang L."/>
        </authorList>
    </citation>
    <scope>NUCLEOTIDE SEQUENCE [LARGE SCALE GENOMIC DNA]</scope>
    <source>
        <strain>ATCC 39541 / Classical Ogawa 395 / O395</strain>
    </source>
</reference>
<name>SSRP_VIBC3</name>
<organism>
    <name type="scientific">Vibrio cholerae serotype O1 (strain ATCC 39541 / Classical Ogawa 395 / O395)</name>
    <dbReference type="NCBI Taxonomy" id="345073"/>
    <lineage>
        <taxon>Bacteria</taxon>
        <taxon>Pseudomonadati</taxon>
        <taxon>Pseudomonadota</taxon>
        <taxon>Gammaproteobacteria</taxon>
        <taxon>Vibrionales</taxon>
        <taxon>Vibrionaceae</taxon>
        <taxon>Vibrio</taxon>
    </lineage>
</organism>
<comment type="function">
    <text evidence="1">Required for rescue of stalled ribosomes mediated by trans-translation. Binds to transfer-messenger RNA (tmRNA), required for stable association of tmRNA with ribosomes. tmRNA and SmpB together mimic tRNA shape, replacing the anticodon stem-loop with SmpB. tmRNA is encoded by the ssrA gene; the 2 termini fold to resemble tRNA(Ala) and it encodes a 'tag peptide', a short internal open reading frame. During trans-translation Ala-aminoacylated tmRNA acts like a tRNA, entering the A-site of stalled ribosomes, displacing the stalled mRNA. The ribosome then switches to translate the ORF on the tmRNA; the nascent peptide is terminated with the 'tag peptide' encoded by the tmRNA and targeted for degradation. The ribosome is freed to recommence translation, which seems to be the essential function of trans-translation.</text>
</comment>
<comment type="subcellular location">
    <subcellularLocation>
        <location evidence="1">Cytoplasm</location>
    </subcellularLocation>
    <text evidence="1">The tmRNA-SmpB complex associates with stalled 70S ribosomes.</text>
</comment>
<comment type="similarity">
    <text evidence="1">Belongs to the SmpB family.</text>
</comment>
<comment type="sequence caution" evidence="2">
    <conflict type="frameshift">
        <sequence resource="EMBL-CDS" id="AAA82715"/>
    </conflict>
</comment>